<accession>Q54VB6</accession>
<evidence type="ECO:0000256" key="1">
    <source>
        <dbReference type="SAM" id="MobiDB-lite"/>
    </source>
</evidence>
<evidence type="ECO:0000269" key="2">
    <source>
    </source>
</evidence>
<evidence type="ECO:0000305" key="3"/>
<reference key="1">
    <citation type="journal article" date="2005" name="Nature">
        <title>The genome of the social amoeba Dictyostelium discoideum.</title>
        <authorList>
            <person name="Eichinger L."/>
            <person name="Pachebat J.A."/>
            <person name="Gloeckner G."/>
            <person name="Rajandream M.A."/>
            <person name="Sucgang R."/>
            <person name="Berriman M."/>
            <person name="Song J."/>
            <person name="Olsen R."/>
            <person name="Szafranski K."/>
            <person name="Xu Q."/>
            <person name="Tunggal B."/>
            <person name="Kummerfeld S."/>
            <person name="Madera M."/>
            <person name="Konfortov B.A."/>
            <person name="Rivero F."/>
            <person name="Bankier A.T."/>
            <person name="Lehmann R."/>
            <person name="Hamlin N."/>
            <person name="Davies R."/>
            <person name="Gaudet P."/>
            <person name="Fey P."/>
            <person name="Pilcher K."/>
            <person name="Chen G."/>
            <person name="Saunders D."/>
            <person name="Sodergren E.J."/>
            <person name="Davis P."/>
            <person name="Kerhornou A."/>
            <person name="Nie X."/>
            <person name="Hall N."/>
            <person name="Anjard C."/>
            <person name="Hemphill L."/>
            <person name="Bason N."/>
            <person name="Farbrother P."/>
            <person name="Desany B."/>
            <person name="Just E."/>
            <person name="Morio T."/>
            <person name="Rost R."/>
            <person name="Churcher C.M."/>
            <person name="Cooper J."/>
            <person name="Haydock S."/>
            <person name="van Driessche N."/>
            <person name="Cronin A."/>
            <person name="Goodhead I."/>
            <person name="Muzny D.M."/>
            <person name="Mourier T."/>
            <person name="Pain A."/>
            <person name="Lu M."/>
            <person name="Harper D."/>
            <person name="Lindsay R."/>
            <person name="Hauser H."/>
            <person name="James K.D."/>
            <person name="Quiles M."/>
            <person name="Madan Babu M."/>
            <person name="Saito T."/>
            <person name="Buchrieser C."/>
            <person name="Wardroper A."/>
            <person name="Felder M."/>
            <person name="Thangavelu M."/>
            <person name="Johnson D."/>
            <person name="Knights A."/>
            <person name="Loulseged H."/>
            <person name="Mungall K.L."/>
            <person name="Oliver K."/>
            <person name="Price C."/>
            <person name="Quail M.A."/>
            <person name="Urushihara H."/>
            <person name="Hernandez J."/>
            <person name="Rabbinowitsch E."/>
            <person name="Steffen D."/>
            <person name="Sanders M."/>
            <person name="Ma J."/>
            <person name="Kohara Y."/>
            <person name="Sharp S."/>
            <person name="Simmonds M.N."/>
            <person name="Spiegler S."/>
            <person name="Tivey A."/>
            <person name="Sugano S."/>
            <person name="White B."/>
            <person name="Walker D."/>
            <person name="Woodward J.R."/>
            <person name="Winckler T."/>
            <person name="Tanaka Y."/>
            <person name="Shaulsky G."/>
            <person name="Schleicher M."/>
            <person name="Weinstock G.M."/>
            <person name="Rosenthal A."/>
            <person name="Cox E.C."/>
            <person name="Chisholm R.L."/>
            <person name="Gibbs R.A."/>
            <person name="Loomis W.F."/>
            <person name="Platzer M."/>
            <person name="Kay R.R."/>
            <person name="Williams J.G."/>
            <person name="Dear P.H."/>
            <person name="Noegel A.A."/>
            <person name="Barrell B.G."/>
            <person name="Kuspa A."/>
        </authorList>
    </citation>
    <scope>NUCLEOTIDE SEQUENCE [LARGE SCALE GENOMIC DNA]</scope>
    <source>
        <strain>AX4</strain>
    </source>
</reference>
<reference key="2">
    <citation type="journal article" date="2008" name="Differentiation">
        <title>The function of PP2A/B56 in non-metazoan multicellular development.</title>
        <authorList>
            <person name="Lee N.-S."/>
            <person name="Veeranki S."/>
            <person name="Kim B."/>
            <person name="Kim L."/>
        </authorList>
    </citation>
    <scope>FUNCTION</scope>
    <scope>DISRUPTION PHENOTYPE</scope>
    <scope>SUBCELLULAR LOCATION</scope>
</reference>
<organism>
    <name type="scientific">Dictyostelium discoideum</name>
    <name type="common">Social amoeba</name>
    <dbReference type="NCBI Taxonomy" id="44689"/>
    <lineage>
        <taxon>Eukaryota</taxon>
        <taxon>Amoebozoa</taxon>
        <taxon>Evosea</taxon>
        <taxon>Eumycetozoa</taxon>
        <taxon>Dictyostelia</taxon>
        <taxon>Dictyosteliales</taxon>
        <taxon>Dictyosteliaceae</taxon>
        <taxon>Dictyostelium</taxon>
    </lineage>
</organism>
<feature type="chain" id="PRO_0000368205" description="Serine/threonine-protein phosphatase 2A regulatory subunit psrA">
    <location>
        <begin position="1"/>
        <end position="628"/>
    </location>
</feature>
<feature type="region of interest" description="Disordered" evidence="1">
    <location>
        <begin position="1"/>
        <end position="61"/>
    </location>
</feature>
<feature type="region of interest" description="Disordered" evidence="1">
    <location>
        <begin position="500"/>
        <end position="558"/>
    </location>
</feature>
<feature type="region of interest" description="Disordered" evidence="1">
    <location>
        <begin position="577"/>
        <end position="628"/>
    </location>
</feature>
<feature type="compositionally biased region" description="Polar residues" evidence="1">
    <location>
        <begin position="1"/>
        <end position="22"/>
    </location>
</feature>
<feature type="compositionally biased region" description="Low complexity" evidence="1">
    <location>
        <begin position="23"/>
        <end position="58"/>
    </location>
</feature>
<feature type="compositionally biased region" description="Low complexity" evidence="1">
    <location>
        <begin position="524"/>
        <end position="547"/>
    </location>
</feature>
<feature type="compositionally biased region" description="Basic and acidic residues" evidence="1">
    <location>
        <begin position="600"/>
        <end position="618"/>
    </location>
</feature>
<gene>
    <name type="primary">psrA</name>
    <name type="synonym">B56</name>
    <name type="synonym">DB56</name>
    <name type="ORF">DDB_G0280469</name>
</gene>
<proteinExistence type="inferred from homology"/>
<dbReference type="EMBL" id="AAFI02000036">
    <property type="protein sequence ID" value="EAL67213.1"/>
    <property type="molecule type" value="Genomic_DNA"/>
</dbReference>
<dbReference type="RefSeq" id="XP_641193.1">
    <property type="nucleotide sequence ID" value="XM_636101.1"/>
</dbReference>
<dbReference type="SMR" id="Q54VB6"/>
<dbReference type="FunCoup" id="Q54VB6">
    <property type="interactions" value="245"/>
</dbReference>
<dbReference type="STRING" id="44689.Q54VB6"/>
<dbReference type="PaxDb" id="44689-DDB0302351"/>
<dbReference type="EnsemblProtists" id="EAL67213">
    <property type="protein sequence ID" value="EAL67213"/>
    <property type="gene ID" value="DDB_G0280469"/>
</dbReference>
<dbReference type="GeneID" id="8622574"/>
<dbReference type="KEGG" id="ddi:DDB_G0280469"/>
<dbReference type="dictyBase" id="DDB_G0280469">
    <property type="gene designation" value="psrA"/>
</dbReference>
<dbReference type="VEuPathDB" id="AmoebaDB:DDB_G0280469"/>
<dbReference type="eggNOG" id="KOG2085">
    <property type="taxonomic scope" value="Eukaryota"/>
</dbReference>
<dbReference type="HOGENOM" id="CLU_012437_3_2_1"/>
<dbReference type="InParanoid" id="Q54VB6"/>
<dbReference type="OMA" id="ECSHEYT"/>
<dbReference type="PhylomeDB" id="Q54VB6"/>
<dbReference type="Reactome" id="R-DDI-198753">
    <property type="pathway name" value="ERK/MAPK targets"/>
</dbReference>
<dbReference type="Reactome" id="R-DDI-202670">
    <property type="pathway name" value="ERKs are inactivated"/>
</dbReference>
<dbReference type="Reactome" id="R-DDI-389513">
    <property type="pathway name" value="Co-inhibition by CTLA4"/>
</dbReference>
<dbReference type="Reactome" id="R-DDI-6811558">
    <property type="pathway name" value="PI5P, PP2A and IER3 Regulate PI3K/AKT Signaling"/>
</dbReference>
<dbReference type="PRO" id="PR:Q54VB6"/>
<dbReference type="Proteomes" id="UP000002195">
    <property type="component" value="Chromosome 3"/>
</dbReference>
<dbReference type="GO" id="GO:0005829">
    <property type="term" value="C:cytosol"/>
    <property type="evidence" value="ECO:0007669"/>
    <property type="project" value="UniProtKB-SubCell"/>
</dbReference>
<dbReference type="GO" id="GO:0000159">
    <property type="term" value="C:protein phosphatase type 2A complex"/>
    <property type="evidence" value="ECO:0000353"/>
    <property type="project" value="dictyBase"/>
</dbReference>
<dbReference type="GO" id="GO:0008603">
    <property type="term" value="F:cAMP-dependent protein kinase regulator activity"/>
    <property type="evidence" value="ECO:0000314"/>
    <property type="project" value="dictyBase"/>
</dbReference>
<dbReference type="GO" id="GO:0030695">
    <property type="term" value="F:GTPase regulator activity"/>
    <property type="evidence" value="ECO:0000314"/>
    <property type="project" value="dictyBase"/>
</dbReference>
<dbReference type="GO" id="GO:0072542">
    <property type="term" value="F:protein phosphatase activator activity"/>
    <property type="evidence" value="ECO:0000318"/>
    <property type="project" value="GO_Central"/>
</dbReference>
<dbReference type="GO" id="GO:0019888">
    <property type="term" value="F:protein phosphatase regulator activity"/>
    <property type="evidence" value="ECO:0000314"/>
    <property type="project" value="dictyBase"/>
</dbReference>
<dbReference type="GO" id="GO:0031267">
    <property type="term" value="F:small GTPase binding"/>
    <property type="evidence" value="ECO:0000353"/>
    <property type="project" value="dictyBase"/>
</dbReference>
<dbReference type="GO" id="GO:0030154">
    <property type="term" value="P:cell differentiation"/>
    <property type="evidence" value="ECO:0000315"/>
    <property type="project" value="dictyBase"/>
</dbReference>
<dbReference type="GO" id="GO:0048870">
    <property type="term" value="P:cell motility"/>
    <property type="evidence" value="ECO:0000315"/>
    <property type="project" value="dictyBase"/>
</dbReference>
<dbReference type="GO" id="GO:0043327">
    <property type="term" value="P:chemotaxis to cAMP"/>
    <property type="evidence" value="ECO:0000315"/>
    <property type="project" value="dictyBase"/>
</dbReference>
<dbReference type="GO" id="GO:0043326">
    <property type="term" value="P:chemotaxis to folate"/>
    <property type="evidence" value="ECO:0000315"/>
    <property type="project" value="dictyBase"/>
</dbReference>
<dbReference type="GO" id="GO:0051177">
    <property type="term" value="P:meiotic sister chromatid cohesion"/>
    <property type="evidence" value="ECO:0000318"/>
    <property type="project" value="GO_Central"/>
</dbReference>
<dbReference type="GO" id="GO:1904643">
    <property type="term" value="P:response to curcumin"/>
    <property type="evidence" value="ECO:0000315"/>
    <property type="project" value="dictyBase"/>
</dbReference>
<dbReference type="GO" id="GO:0007165">
    <property type="term" value="P:signal transduction"/>
    <property type="evidence" value="ECO:0007669"/>
    <property type="project" value="InterPro"/>
</dbReference>
<dbReference type="GO" id="GO:0030587">
    <property type="term" value="P:sorocarp development"/>
    <property type="evidence" value="ECO:0000315"/>
    <property type="project" value="dictyBase"/>
</dbReference>
<dbReference type="FunFam" id="1.25.10.10:FF:000353">
    <property type="entry name" value="Serine/threonine-protein phosphatase 2A 56 kDa regulatory subunit"/>
    <property type="match status" value="1"/>
</dbReference>
<dbReference type="Gene3D" id="1.25.10.10">
    <property type="entry name" value="Leucine-rich Repeat Variant"/>
    <property type="match status" value="1"/>
</dbReference>
<dbReference type="InterPro" id="IPR011989">
    <property type="entry name" value="ARM-like"/>
</dbReference>
<dbReference type="InterPro" id="IPR016024">
    <property type="entry name" value="ARM-type_fold"/>
</dbReference>
<dbReference type="InterPro" id="IPR002554">
    <property type="entry name" value="PP2A_B56"/>
</dbReference>
<dbReference type="PANTHER" id="PTHR10257">
    <property type="entry name" value="SERINE/THREONINE PROTEIN PHOSPHATASE 2A PP2A REGULATORY SUBUNIT B"/>
    <property type="match status" value="1"/>
</dbReference>
<dbReference type="PANTHER" id="PTHR10257:SF3">
    <property type="entry name" value="SERINE_THREONINE-PROTEIN PHOSPHATASE 2A 56 KDA REGULATORY SUBUNIT GAMMA ISOFORM"/>
    <property type="match status" value="1"/>
</dbReference>
<dbReference type="Pfam" id="PF01603">
    <property type="entry name" value="B56"/>
    <property type="match status" value="1"/>
</dbReference>
<dbReference type="PIRSF" id="PIRSF028043">
    <property type="entry name" value="PP2A_B56"/>
    <property type="match status" value="1"/>
</dbReference>
<dbReference type="SUPFAM" id="SSF48371">
    <property type="entry name" value="ARM repeat"/>
    <property type="match status" value="1"/>
</dbReference>
<keyword id="KW-0963">Cytoplasm</keyword>
<keyword id="KW-1185">Reference proteome</keyword>
<protein>
    <recommendedName>
        <fullName>Serine/threonine-protein phosphatase 2A regulatory subunit psrA</fullName>
    </recommendedName>
    <alternativeName>
        <fullName>Protein PPP2R5A/B56 homolog</fullName>
    </alternativeName>
    <alternativeName>
        <fullName>Protein phosphatase 2A regulatory B subunit</fullName>
    </alternativeName>
    <alternativeName>
        <fullName>Serine/threonine-protein phosphatase 2A 56 kDa regulatory subunit</fullName>
    </alternativeName>
    <alternativeName>
        <fullName>protein phosphatase 2A B56 regulatory subunit homolog</fullName>
    </alternativeName>
</protein>
<name>PSRA_DICDI</name>
<comment type="function">
    <text evidence="2">Involved in developmental cell fate decision.</text>
</comment>
<comment type="subunit">
    <text>PP2A consists of a trimeric holoenzyme, composed of a 37 kDa catalytic subunit (C subunit) and a 65 kDa constant regulatory subunit (A subunit), that associates with a variety of regulatory subunits (B subunit) such as phr2AB (B55) and psrA (B56 homolog). The trimer may partially dissociates into a core 'AC' dimer equally active compared to the trimer. Seems to play a role in proper anterior patterning (pstO and pstAB).</text>
</comment>
<comment type="subcellular location">
    <subcellularLocation>
        <location evidence="2">Cytoplasm</location>
        <location evidence="2">Cytosol</location>
    </subcellularLocation>
</comment>
<comment type="disruption phenotype">
    <text evidence="2">Null cells displays higher PP2A phosphatase activity compared with the wild type, around 10 hours of delayed expression of ecmA and ecmB prestalk markers, inefficient culmination and higher GSK3 kinase activity.</text>
</comment>
<comment type="similarity">
    <text evidence="3">Belongs to the phosphatase 2A regulatory subunit B56 family.</text>
</comment>
<sequence>MKNDHINYQQNLSQSPILNSNKNQTQQNQQQQQQQQQQNPQQQQQFQHQQVPQLSPQQIPFSEPLKNNLTLQHQQQQQQHQQLAGGQHGSLLRKSYSSRFHEKPQGELTKIANFQDVSPEERPSLFLLKLKQCCYVYDFSDNTYMVSKGVKQEALLQCVNFLSTNDQPLHESIYKMVFEMVAVNLFRPLPPRINPYGVMYDPEEDEPILEAAWPHIQVVYEVLLRFIDSPTFNTHIAKNYVDDRFVLQMLDLFDSEDPRERDYLKTTLHRIYGKFLGLRGFIRTAIRNLFCTFVYESHQHNGISEILEVLGSIINGFLVPLKDEHKQFLIKVLIPLHKPKSYSVYCSHLGYCMSQFIEKEPSLAEPIFKSILRLWPCGNSQKEVLFLSEMEDLLGLVSDEQFAKFRNQFFRQMTKCFQSEHFQVAERALYLFSNENIVLLIASKNNFTLALETFYKPLHENSISHWNRSIRNLSISSLKLFMEIDMDLFNKISEKYKESKKKQQQIQQREKFKQNAPETQKSKQINQNNNNNNNNINNNNNNNNNNNGSTETKADKPSMIRRKSLLPVDPSTIAALSSHRSLEDIMSTNSNSGNDDDDENNHTNHDSEIENEVKEDFRVPVNNRYTFT</sequence>